<sequence>MNIAVSKPPLTIRLCGPRGFCAGVDRAIQIVVLALKAYGAPVYVRHEIVHNRYVVEGLEAKGAIFVEELHEIPAEHREQPVVFSAHGVPKSVPEDAQARNLFYLDATCPLVSKVHKQAMRHQRLGRHVVLIGHAGHPEVIGTMGQLPEGTVSLVETVEDAGVYEPVDRENLGFVTQTTLSVDDTAGVIARLQERFPAIQAPAADSICYATTNRQDAVKQAAPGCDLFIVVGAPNSSNSKRLVEVALRAGAKHSVLVQRASEIDWNEIGDIRTVGLSAGASAPEVIVDEIIEAFKARFDTTLDLAVTVEETEHFLVNRELRSIELTTDDMAFVNGNASNALPPKATAGI</sequence>
<proteinExistence type="inferred from homology"/>
<dbReference type="EC" id="1.17.7.4" evidence="1"/>
<dbReference type="EMBL" id="AE007869">
    <property type="protein sequence ID" value="AAK86583.1"/>
    <property type="molecule type" value="Genomic_DNA"/>
</dbReference>
<dbReference type="PIR" id="AH2671">
    <property type="entry name" value="AH2671"/>
</dbReference>
<dbReference type="PIR" id="F97453">
    <property type="entry name" value="F97453"/>
</dbReference>
<dbReference type="RefSeq" id="NP_353798.1">
    <property type="nucleotide sequence ID" value="NC_003062.2"/>
</dbReference>
<dbReference type="RefSeq" id="WP_010971140.1">
    <property type="nucleotide sequence ID" value="NC_003062.2"/>
</dbReference>
<dbReference type="SMR" id="P58673"/>
<dbReference type="STRING" id="176299.Atu0774"/>
<dbReference type="EnsemblBacteria" id="AAK86583">
    <property type="protein sequence ID" value="AAK86583"/>
    <property type="gene ID" value="Atu0774"/>
</dbReference>
<dbReference type="GeneID" id="1132812"/>
<dbReference type="KEGG" id="atu:Atu0774"/>
<dbReference type="PATRIC" id="fig|176299.10.peg.774"/>
<dbReference type="eggNOG" id="COG0761">
    <property type="taxonomic scope" value="Bacteria"/>
</dbReference>
<dbReference type="HOGENOM" id="CLU_027486_1_0_5"/>
<dbReference type="OrthoDB" id="9804068at2"/>
<dbReference type="PhylomeDB" id="P58673"/>
<dbReference type="BioCyc" id="AGRO:ATU0774-MONOMER"/>
<dbReference type="UniPathway" id="UPA00056">
    <property type="reaction ID" value="UER00097"/>
</dbReference>
<dbReference type="UniPathway" id="UPA00059">
    <property type="reaction ID" value="UER00105"/>
</dbReference>
<dbReference type="Proteomes" id="UP000000813">
    <property type="component" value="Chromosome circular"/>
</dbReference>
<dbReference type="GO" id="GO:0051539">
    <property type="term" value="F:4 iron, 4 sulfur cluster binding"/>
    <property type="evidence" value="ECO:0007669"/>
    <property type="project" value="UniProtKB-UniRule"/>
</dbReference>
<dbReference type="GO" id="GO:0051745">
    <property type="term" value="F:4-hydroxy-3-methylbut-2-enyl diphosphate reductase activity"/>
    <property type="evidence" value="ECO:0007669"/>
    <property type="project" value="UniProtKB-UniRule"/>
</dbReference>
<dbReference type="GO" id="GO:0046872">
    <property type="term" value="F:metal ion binding"/>
    <property type="evidence" value="ECO:0007669"/>
    <property type="project" value="UniProtKB-KW"/>
</dbReference>
<dbReference type="GO" id="GO:0050992">
    <property type="term" value="P:dimethylallyl diphosphate biosynthetic process"/>
    <property type="evidence" value="ECO:0007669"/>
    <property type="project" value="UniProtKB-UniRule"/>
</dbReference>
<dbReference type="GO" id="GO:0019288">
    <property type="term" value="P:isopentenyl diphosphate biosynthetic process, methylerythritol 4-phosphate pathway"/>
    <property type="evidence" value="ECO:0007669"/>
    <property type="project" value="UniProtKB-UniRule"/>
</dbReference>
<dbReference type="GO" id="GO:0016114">
    <property type="term" value="P:terpenoid biosynthetic process"/>
    <property type="evidence" value="ECO:0007669"/>
    <property type="project" value="UniProtKB-UniRule"/>
</dbReference>
<dbReference type="CDD" id="cd13944">
    <property type="entry name" value="lytB_ispH"/>
    <property type="match status" value="1"/>
</dbReference>
<dbReference type="Gene3D" id="3.40.50.11270">
    <property type="match status" value="1"/>
</dbReference>
<dbReference type="Gene3D" id="3.40.1010.20">
    <property type="entry name" value="4-hydroxy-3-methylbut-2-enyl diphosphate reductase, catalytic domain"/>
    <property type="match status" value="2"/>
</dbReference>
<dbReference type="HAMAP" id="MF_00191">
    <property type="entry name" value="IspH"/>
    <property type="match status" value="1"/>
</dbReference>
<dbReference type="InterPro" id="IPR003451">
    <property type="entry name" value="LytB/IspH"/>
</dbReference>
<dbReference type="NCBIfam" id="TIGR00216">
    <property type="entry name" value="ispH_lytB"/>
    <property type="match status" value="1"/>
</dbReference>
<dbReference type="NCBIfam" id="NF002190">
    <property type="entry name" value="PRK01045.1-4"/>
    <property type="match status" value="1"/>
</dbReference>
<dbReference type="PANTHER" id="PTHR30426">
    <property type="entry name" value="4-HYDROXY-3-METHYLBUT-2-ENYL DIPHOSPHATE REDUCTASE"/>
    <property type="match status" value="1"/>
</dbReference>
<dbReference type="PANTHER" id="PTHR30426:SF0">
    <property type="entry name" value="4-HYDROXY-3-METHYLBUT-2-ENYL DIPHOSPHATE REDUCTASE"/>
    <property type="match status" value="1"/>
</dbReference>
<dbReference type="Pfam" id="PF02401">
    <property type="entry name" value="LYTB"/>
    <property type="match status" value="1"/>
</dbReference>
<keyword id="KW-0004">4Fe-4S</keyword>
<keyword id="KW-0408">Iron</keyword>
<keyword id="KW-0411">Iron-sulfur</keyword>
<keyword id="KW-0414">Isoprene biosynthesis</keyword>
<keyword id="KW-0479">Metal-binding</keyword>
<keyword id="KW-0560">Oxidoreductase</keyword>
<keyword id="KW-1185">Reference proteome</keyword>
<comment type="function">
    <text evidence="1">Catalyzes the conversion of 1-hydroxy-2-methyl-2-(E)-butenyl 4-diphosphate (HMBPP) into a mixture of isopentenyl diphosphate (IPP) and dimethylallyl diphosphate (DMAPP). Acts in the terminal step of the DOXP/MEP pathway for isoprenoid precursor biosynthesis.</text>
</comment>
<comment type="catalytic activity">
    <reaction evidence="1">
        <text>isopentenyl diphosphate + 2 oxidized [2Fe-2S]-[ferredoxin] + H2O = (2E)-4-hydroxy-3-methylbut-2-enyl diphosphate + 2 reduced [2Fe-2S]-[ferredoxin] + 2 H(+)</text>
        <dbReference type="Rhea" id="RHEA:24488"/>
        <dbReference type="Rhea" id="RHEA-COMP:10000"/>
        <dbReference type="Rhea" id="RHEA-COMP:10001"/>
        <dbReference type="ChEBI" id="CHEBI:15377"/>
        <dbReference type="ChEBI" id="CHEBI:15378"/>
        <dbReference type="ChEBI" id="CHEBI:33737"/>
        <dbReference type="ChEBI" id="CHEBI:33738"/>
        <dbReference type="ChEBI" id="CHEBI:128753"/>
        <dbReference type="ChEBI" id="CHEBI:128769"/>
        <dbReference type="EC" id="1.17.7.4"/>
    </reaction>
</comment>
<comment type="catalytic activity">
    <reaction evidence="1">
        <text>dimethylallyl diphosphate + 2 oxidized [2Fe-2S]-[ferredoxin] + H2O = (2E)-4-hydroxy-3-methylbut-2-enyl diphosphate + 2 reduced [2Fe-2S]-[ferredoxin] + 2 H(+)</text>
        <dbReference type="Rhea" id="RHEA:24825"/>
        <dbReference type="Rhea" id="RHEA-COMP:10000"/>
        <dbReference type="Rhea" id="RHEA-COMP:10001"/>
        <dbReference type="ChEBI" id="CHEBI:15377"/>
        <dbReference type="ChEBI" id="CHEBI:15378"/>
        <dbReference type="ChEBI" id="CHEBI:33737"/>
        <dbReference type="ChEBI" id="CHEBI:33738"/>
        <dbReference type="ChEBI" id="CHEBI:57623"/>
        <dbReference type="ChEBI" id="CHEBI:128753"/>
        <dbReference type="EC" id="1.17.7.4"/>
    </reaction>
</comment>
<comment type="cofactor">
    <cofactor evidence="1">
        <name>[4Fe-4S] cluster</name>
        <dbReference type="ChEBI" id="CHEBI:49883"/>
    </cofactor>
    <text evidence="1">Binds 1 [4Fe-4S] cluster per subunit.</text>
</comment>
<comment type="pathway">
    <text evidence="1">Isoprenoid biosynthesis; dimethylallyl diphosphate biosynthesis; dimethylallyl diphosphate from (2E)-4-hydroxy-3-methylbutenyl diphosphate: step 1/1.</text>
</comment>
<comment type="pathway">
    <text evidence="1">Isoprenoid biosynthesis; isopentenyl diphosphate biosynthesis via DXP pathway; isopentenyl diphosphate from 1-deoxy-D-xylulose 5-phosphate: step 6/6.</text>
</comment>
<comment type="similarity">
    <text evidence="1">Belongs to the IspH family.</text>
</comment>
<accession>P58673</accession>
<gene>
    <name evidence="1" type="primary">ispH</name>
    <name type="synonym">lytB</name>
    <name type="ordered locus">Atu0774</name>
    <name type="ORF">AGR_C_1414</name>
</gene>
<protein>
    <recommendedName>
        <fullName evidence="1">4-hydroxy-3-methylbut-2-enyl diphosphate reductase</fullName>
        <shortName evidence="1">HMBPP reductase</shortName>
        <ecNumber evidence="1">1.17.7.4</ecNumber>
    </recommendedName>
</protein>
<name>ISPH_AGRFC</name>
<reference key="1">
    <citation type="journal article" date="2001" name="Science">
        <title>The genome of the natural genetic engineer Agrobacterium tumefaciens C58.</title>
        <authorList>
            <person name="Wood D.W."/>
            <person name="Setubal J.C."/>
            <person name="Kaul R."/>
            <person name="Monks D.E."/>
            <person name="Kitajima J.P."/>
            <person name="Okura V.K."/>
            <person name="Zhou Y."/>
            <person name="Chen L."/>
            <person name="Wood G.E."/>
            <person name="Almeida N.F. Jr."/>
            <person name="Woo L."/>
            <person name="Chen Y."/>
            <person name="Paulsen I.T."/>
            <person name="Eisen J.A."/>
            <person name="Karp P.D."/>
            <person name="Bovee D. Sr."/>
            <person name="Chapman P."/>
            <person name="Clendenning J."/>
            <person name="Deatherage G."/>
            <person name="Gillet W."/>
            <person name="Grant C."/>
            <person name="Kutyavin T."/>
            <person name="Levy R."/>
            <person name="Li M.-J."/>
            <person name="McClelland E."/>
            <person name="Palmieri A."/>
            <person name="Raymond C."/>
            <person name="Rouse G."/>
            <person name="Saenphimmachak C."/>
            <person name="Wu Z."/>
            <person name="Romero P."/>
            <person name="Gordon D."/>
            <person name="Zhang S."/>
            <person name="Yoo H."/>
            <person name="Tao Y."/>
            <person name="Biddle P."/>
            <person name="Jung M."/>
            <person name="Krespan W."/>
            <person name="Perry M."/>
            <person name="Gordon-Kamm B."/>
            <person name="Liao L."/>
            <person name="Kim S."/>
            <person name="Hendrick C."/>
            <person name="Zhao Z.-Y."/>
            <person name="Dolan M."/>
            <person name="Chumley F."/>
            <person name="Tingey S.V."/>
            <person name="Tomb J.-F."/>
            <person name="Gordon M.P."/>
            <person name="Olson M.V."/>
            <person name="Nester E.W."/>
        </authorList>
    </citation>
    <scope>NUCLEOTIDE SEQUENCE [LARGE SCALE GENOMIC DNA]</scope>
    <source>
        <strain>C58 / ATCC 33970</strain>
    </source>
</reference>
<reference key="2">
    <citation type="journal article" date="2001" name="Science">
        <title>Genome sequence of the plant pathogen and biotechnology agent Agrobacterium tumefaciens C58.</title>
        <authorList>
            <person name="Goodner B."/>
            <person name="Hinkle G."/>
            <person name="Gattung S."/>
            <person name="Miller N."/>
            <person name="Blanchard M."/>
            <person name="Qurollo B."/>
            <person name="Goldman B.S."/>
            <person name="Cao Y."/>
            <person name="Askenazi M."/>
            <person name="Halling C."/>
            <person name="Mullin L."/>
            <person name="Houmiel K."/>
            <person name="Gordon J."/>
            <person name="Vaudin M."/>
            <person name="Iartchouk O."/>
            <person name="Epp A."/>
            <person name="Liu F."/>
            <person name="Wollam C."/>
            <person name="Allinger M."/>
            <person name="Doughty D."/>
            <person name="Scott C."/>
            <person name="Lappas C."/>
            <person name="Markelz B."/>
            <person name="Flanagan C."/>
            <person name="Crowell C."/>
            <person name="Gurson J."/>
            <person name="Lomo C."/>
            <person name="Sear C."/>
            <person name="Strub G."/>
            <person name="Cielo C."/>
            <person name="Slater S."/>
        </authorList>
    </citation>
    <scope>NUCLEOTIDE SEQUENCE [LARGE SCALE GENOMIC DNA]</scope>
    <source>
        <strain>C58 / ATCC 33970</strain>
    </source>
</reference>
<evidence type="ECO:0000255" key="1">
    <source>
        <dbReference type="HAMAP-Rule" id="MF_00191"/>
    </source>
</evidence>
<organism>
    <name type="scientific">Agrobacterium fabrum (strain C58 / ATCC 33970)</name>
    <name type="common">Agrobacterium tumefaciens (strain C58)</name>
    <dbReference type="NCBI Taxonomy" id="176299"/>
    <lineage>
        <taxon>Bacteria</taxon>
        <taxon>Pseudomonadati</taxon>
        <taxon>Pseudomonadota</taxon>
        <taxon>Alphaproteobacteria</taxon>
        <taxon>Hyphomicrobiales</taxon>
        <taxon>Rhizobiaceae</taxon>
        <taxon>Rhizobium/Agrobacterium group</taxon>
        <taxon>Agrobacterium</taxon>
        <taxon>Agrobacterium tumefaciens complex</taxon>
    </lineage>
</organism>
<feature type="chain" id="PRO_0000128763" description="4-hydroxy-3-methylbut-2-enyl diphosphate reductase">
    <location>
        <begin position="1"/>
        <end position="348"/>
    </location>
</feature>
<feature type="active site" description="Proton donor" evidence="1">
    <location>
        <position position="138"/>
    </location>
</feature>
<feature type="binding site" evidence="1">
    <location>
        <position position="21"/>
    </location>
    <ligand>
        <name>[4Fe-4S] cluster</name>
        <dbReference type="ChEBI" id="CHEBI:49883"/>
    </ligand>
</feature>
<feature type="binding site" evidence="1">
    <location>
        <position position="50"/>
    </location>
    <ligand>
        <name>(2E)-4-hydroxy-3-methylbut-2-enyl diphosphate</name>
        <dbReference type="ChEBI" id="CHEBI:128753"/>
    </ligand>
</feature>
<feature type="binding site" evidence="1">
    <location>
        <position position="50"/>
    </location>
    <ligand>
        <name>dimethylallyl diphosphate</name>
        <dbReference type="ChEBI" id="CHEBI:57623"/>
    </ligand>
</feature>
<feature type="binding site" evidence="1">
    <location>
        <position position="50"/>
    </location>
    <ligand>
        <name>isopentenyl diphosphate</name>
        <dbReference type="ChEBI" id="CHEBI:128769"/>
    </ligand>
</feature>
<feature type="binding site" evidence="1">
    <location>
        <position position="86"/>
    </location>
    <ligand>
        <name>(2E)-4-hydroxy-3-methylbut-2-enyl diphosphate</name>
        <dbReference type="ChEBI" id="CHEBI:128753"/>
    </ligand>
</feature>
<feature type="binding site" evidence="1">
    <location>
        <position position="86"/>
    </location>
    <ligand>
        <name>dimethylallyl diphosphate</name>
        <dbReference type="ChEBI" id="CHEBI:57623"/>
    </ligand>
</feature>
<feature type="binding site" evidence="1">
    <location>
        <position position="86"/>
    </location>
    <ligand>
        <name>isopentenyl diphosphate</name>
        <dbReference type="ChEBI" id="CHEBI:128769"/>
    </ligand>
</feature>
<feature type="binding site" evidence="1">
    <location>
        <position position="108"/>
    </location>
    <ligand>
        <name>[4Fe-4S] cluster</name>
        <dbReference type="ChEBI" id="CHEBI:49883"/>
    </ligand>
</feature>
<feature type="binding site" evidence="1">
    <location>
        <position position="136"/>
    </location>
    <ligand>
        <name>(2E)-4-hydroxy-3-methylbut-2-enyl diphosphate</name>
        <dbReference type="ChEBI" id="CHEBI:128753"/>
    </ligand>
</feature>
<feature type="binding site" evidence="1">
    <location>
        <position position="136"/>
    </location>
    <ligand>
        <name>dimethylallyl diphosphate</name>
        <dbReference type="ChEBI" id="CHEBI:57623"/>
    </ligand>
</feature>
<feature type="binding site" evidence="1">
    <location>
        <position position="136"/>
    </location>
    <ligand>
        <name>isopentenyl diphosphate</name>
        <dbReference type="ChEBI" id="CHEBI:128769"/>
    </ligand>
</feature>
<feature type="binding site" evidence="1">
    <location>
        <position position="177"/>
    </location>
    <ligand>
        <name>(2E)-4-hydroxy-3-methylbut-2-enyl diphosphate</name>
        <dbReference type="ChEBI" id="CHEBI:128753"/>
    </ligand>
</feature>
<feature type="binding site" evidence="1">
    <location>
        <position position="207"/>
    </location>
    <ligand>
        <name>[4Fe-4S] cluster</name>
        <dbReference type="ChEBI" id="CHEBI:49883"/>
    </ligand>
</feature>
<feature type="binding site" evidence="1">
    <location>
        <position position="235"/>
    </location>
    <ligand>
        <name>(2E)-4-hydroxy-3-methylbut-2-enyl diphosphate</name>
        <dbReference type="ChEBI" id="CHEBI:128753"/>
    </ligand>
</feature>
<feature type="binding site" evidence="1">
    <location>
        <position position="235"/>
    </location>
    <ligand>
        <name>dimethylallyl diphosphate</name>
        <dbReference type="ChEBI" id="CHEBI:57623"/>
    </ligand>
</feature>
<feature type="binding site" evidence="1">
    <location>
        <position position="235"/>
    </location>
    <ligand>
        <name>isopentenyl diphosphate</name>
        <dbReference type="ChEBI" id="CHEBI:128769"/>
    </ligand>
</feature>
<feature type="binding site" evidence="1">
    <location>
        <position position="236"/>
    </location>
    <ligand>
        <name>(2E)-4-hydroxy-3-methylbut-2-enyl diphosphate</name>
        <dbReference type="ChEBI" id="CHEBI:128753"/>
    </ligand>
</feature>
<feature type="binding site" evidence="1">
    <location>
        <position position="236"/>
    </location>
    <ligand>
        <name>dimethylallyl diphosphate</name>
        <dbReference type="ChEBI" id="CHEBI:57623"/>
    </ligand>
</feature>
<feature type="binding site" evidence="1">
    <location>
        <position position="236"/>
    </location>
    <ligand>
        <name>isopentenyl diphosphate</name>
        <dbReference type="ChEBI" id="CHEBI:128769"/>
    </ligand>
</feature>
<feature type="binding site" evidence="1">
    <location>
        <position position="237"/>
    </location>
    <ligand>
        <name>(2E)-4-hydroxy-3-methylbut-2-enyl diphosphate</name>
        <dbReference type="ChEBI" id="CHEBI:128753"/>
    </ligand>
</feature>
<feature type="binding site" evidence="1">
    <location>
        <position position="237"/>
    </location>
    <ligand>
        <name>dimethylallyl diphosphate</name>
        <dbReference type="ChEBI" id="CHEBI:57623"/>
    </ligand>
</feature>
<feature type="binding site" evidence="1">
    <location>
        <position position="237"/>
    </location>
    <ligand>
        <name>isopentenyl diphosphate</name>
        <dbReference type="ChEBI" id="CHEBI:128769"/>
    </ligand>
</feature>
<feature type="binding site" evidence="1">
    <location>
        <position position="280"/>
    </location>
    <ligand>
        <name>(2E)-4-hydroxy-3-methylbut-2-enyl diphosphate</name>
        <dbReference type="ChEBI" id="CHEBI:128753"/>
    </ligand>
</feature>
<feature type="binding site" evidence="1">
    <location>
        <position position="280"/>
    </location>
    <ligand>
        <name>dimethylallyl diphosphate</name>
        <dbReference type="ChEBI" id="CHEBI:57623"/>
    </ligand>
</feature>
<feature type="binding site" evidence="1">
    <location>
        <position position="280"/>
    </location>
    <ligand>
        <name>isopentenyl diphosphate</name>
        <dbReference type="ChEBI" id="CHEBI:128769"/>
    </ligand>
</feature>